<dbReference type="EMBL" id="CP000583">
    <property type="protein sequence ID" value="ABO94979.1"/>
    <property type="molecule type" value="Genomic_DNA"/>
</dbReference>
<dbReference type="SMR" id="A4RUK2"/>
<dbReference type="STRING" id="436017.A4RUK2"/>
<dbReference type="EnsemblPlants" id="ABO94979">
    <property type="protein sequence ID" value="ABO94979"/>
    <property type="gene ID" value="OSTLU_12355"/>
</dbReference>
<dbReference type="Gramene" id="ABO94979">
    <property type="protein sequence ID" value="ABO94979"/>
    <property type="gene ID" value="OSTLU_12355"/>
</dbReference>
<dbReference type="KEGG" id="olu:OSTLU_12355"/>
<dbReference type="eggNOG" id="KOG0830">
    <property type="taxonomic scope" value="Eukaryota"/>
</dbReference>
<dbReference type="HOGENOM" id="CLU_058171_0_1_1"/>
<dbReference type="OMA" id="QCHLGAK"/>
<dbReference type="OrthoDB" id="414863at2759"/>
<dbReference type="Proteomes" id="UP000001568">
    <property type="component" value="Chromosome 3"/>
</dbReference>
<dbReference type="GO" id="GO:0022627">
    <property type="term" value="C:cytosolic small ribosomal subunit"/>
    <property type="evidence" value="ECO:0007669"/>
    <property type="project" value="UniProtKB-UniRule"/>
</dbReference>
<dbReference type="GO" id="GO:0003735">
    <property type="term" value="F:structural constituent of ribosome"/>
    <property type="evidence" value="ECO:0007669"/>
    <property type="project" value="UniProtKB-UniRule"/>
</dbReference>
<dbReference type="GO" id="GO:0000028">
    <property type="term" value="P:ribosomal small subunit assembly"/>
    <property type="evidence" value="ECO:0007669"/>
    <property type="project" value="UniProtKB-UniRule"/>
</dbReference>
<dbReference type="GO" id="GO:0006412">
    <property type="term" value="P:translation"/>
    <property type="evidence" value="ECO:0007669"/>
    <property type="project" value="UniProtKB-UniRule"/>
</dbReference>
<dbReference type="CDD" id="cd01425">
    <property type="entry name" value="RPS2"/>
    <property type="match status" value="1"/>
</dbReference>
<dbReference type="FunFam" id="3.40.50.10490:FF:000017">
    <property type="entry name" value="40S ribosomal protein SA"/>
    <property type="match status" value="1"/>
</dbReference>
<dbReference type="Gene3D" id="3.40.50.10490">
    <property type="entry name" value="Glucose-6-phosphate isomerase like protein, domain 1"/>
    <property type="match status" value="1"/>
</dbReference>
<dbReference type="HAMAP" id="MF_03015">
    <property type="entry name" value="Ribosomal_S2_euk"/>
    <property type="match status" value="1"/>
</dbReference>
<dbReference type="InterPro" id="IPR001865">
    <property type="entry name" value="Ribosomal_uS2"/>
</dbReference>
<dbReference type="InterPro" id="IPR032281">
    <property type="entry name" value="Ribosomal_uS2_C"/>
</dbReference>
<dbReference type="InterPro" id="IPR018130">
    <property type="entry name" value="Ribosomal_uS2_CS"/>
</dbReference>
<dbReference type="InterPro" id="IPR027498">
    <property type="entry name" value="Ribosomal_uS2_euk"/>
</dbReference>
<dbReference type="InterPro" id="IPR005707">
    <property type="entry name" value="Ribosomal_uS2_euk/arc"/>
</dbReference>
<dbReference type="InterPro" id="IPR023591">
    <property type="entry name" value="Ribosomal_uS2_flav_dom_sf"/>
</dbReference>
<dbReference type="NCBIfam" id="TIGR01012">
    <property type="entry name" value="uS2_euk_arch"/>
    <property type="match status" value="1"/>
</dbReference>
<dbReference type="PANTHER" id="PTHR11489">
    <property type="entry name" value="40S RIBOSOMAL PROTEIN SA"/>
    <property type="match status" value="1"/>
</dbReference>
<dbReference type="Pfam" id="PF16122">
    <property type="entry name" value="40S_SA_C"/>
    <property type="match status" value="1"/>
</dbReference>
<dbReference type="Pfam" id="PF00318">
    <property type="entry name" value="Ribosomal_S2"/>
    <property type="match status" value="2"/>
</dbReference>
<dbReference type="PRINTS" id="PR00395">
    <property type="entry name" value="RIBOSOMALS2"/>
</dbReference>
<dbReference type="SUPFAM" id="SSF52313">
    <property type="entry name" value="Ribosomal protein S2"/>
    <property type="match status" value="1"/>
</dbReference>
<dbReference type="PROSITE" id="PS00963">
    <property type="entry name" value="RIBOSOMAL_S2_2"/>
    <property type="match status" value="1"/>
</dbReference>
<gene>
    <name type="ORF">OSTLU_12355</name>
</gene>
<organism>
    <name type="scientific">Ostreococcus lucimarinus (strain CCE9901)</name>
    <dbReference type="NCBI Taxonomy" id="436017"/>
    <lineage>
        <taxon>Eukaryota</taxon>
        <taxon>Viridiplantae</taxon>
        <taxon>Chlorophyta</taxon>
        <taxon>Mamiellophyceae</taxon>
        <taxon>Mamiellales</taxon>
        <taxon>Bathycoccaceae</taxon>
        <taxon>Ostreococcus</taxon>
    </lineage>
</organism>
<accession>A4RUK2</accession>
<name>RSSA_OSTLU</name>
<proteinExistence type="inferred from homology"/>
<sequence>MAPQMSQKEADIAMMLAAGCHLGTKNVDFQMERYVWKRRADGIHIINLGRTWDKLMLAARIIVACENPQDVICQAARPYGQRAVLKFAQYTGAKAIAGRHTPGTYTNQKDAIFAEPRVLIVTDPRTDAQPISETAYVNLPTIAFCDTDSPLKNVDVAIPANNKAKHSIGCLYYLLARMVLQMRGTVSAANPWDVMVDLFFYRDPEELEAKEEEAAAAAAAPAESAGYNAVADAAYGAESWDEQKPAEAFPTGGFAPAAGNWSEAPAPTGWDAQQGGDFGSGFGAMPPQGY</sequence>
<keyword id="KW-0963">Cytoplasm</keyword>
<keyword id="KW-1185">Reference proteome</keyword>
<keyword id="KW-0687">Ribonucleoprotein</keyword>
<keyword id="KW-0689">Ribosomal protein</keyword>
<protein>
    <recommendedName>
        <fullName evidence="1">Small ribosomal subunit protein uS2</fullName>
    </recommendedName>
    <alternativeName>
        <fullName evidence="3">40S ribosomal protein SA</fullName>
    </alternativeName>
</protein>
<evidence type="ECO:0000255" key="1">
    <source>
        <dbReference type="HAMAP-Rule" id="MF_03015"/>
    </source>
</evidence>
<evidence type="ECO:0000256" key="2">
    <source>
        <dbReference type="SAM" id="MobiDB-lite"/>
    </source>
</evidence>
<evidence type="ECO:0000305" key="3"/>
<comment type="function">
    <text evidence="1">Required for the assembly and/or stability of the 40S ribosomal subunit. Required for the processing of the 20S rRNA-precursor to mature 18S rRNA in a late step of the maturation of 40S ribosomal subunits.</text>
</comment>
<comment type="subunit">
    <text evidence="1">Component of the small ribosomal subunit. Mature ribosomes consist of a small (40S) and a large (60S) subunit. The 40S subunit contains about 33 different proteins and 1 molecule of RNA (18S). The 60S subunit contains about 49 different proteins and 3 molecules of RNA (25S, 5.8S and 5S). Interacts with ribosomal protein S21.</text>
</comment>
<comment type="subcellular location">
    <subcellularLocation>
        <location evidence="1">Cytoplasm</location>
    </subcellularLocation>
</comment>
<comment type="similarity">
    <text evidence="1">Belongs to the universal ribosomal protein uS2 family.</text>
</comment>
<reference key="1">
    <citation type="journal article" date="2007" name="Proc. Natl. Acad. Sci. U.S.A.">
        <title>The tiny eukaryote Ostreococcus provides genomic insights into the paradox of plankton speciation.</title>
        <authorList>
            <person name="Palenik B."/>
            <person name="Grimwood J."/>
            <person name="Aerts A."/>
            <person name="Rouze P."/>
            <person name="Salamov A."/>
            <person name="Putnam N."/>
            <person name="Dupont C."/>
            <person name="Jorgensen R."/>
            <person name="Derelle E."/>
            <person name="Rombauts S."/>
            <person name="Zhou K."/>
            <person name="Otillar R."/>
            <person name="Merchant S.S."/>
            <person name="Podell S."/>
            <person name="Gaasterland T."/>
            <person name="Napoli C."/>
            <person name="Gendler K."/>
            <person name="Manuell A."/>
            <person name="Tai V."/>
            <person name="Vallon O."/>
            <person name="Piganeau G."/>
            <person name="Jancek S."/>
            <person name="Heijde M."/>
            <person name="Jabbari K."/>
            <person name="Bowler C."/>
            <person name="Lohr M."/>
            <person name="Robbens S."/>
            <person name="Werner G."/>
            <person name="Dubchak I."/>
            <person name="Pazour G.J."/>
            <person name="Ren Q."/>
            <person name="Paulsen I."/>
            <person name="Delwiche C."/>
            <person name="Schmutz J."/>
            <person name="Rokhsar D."/>
            <person name="Van de Peer Y."/>
            <person name="Moreau H."/>
            <person name="Grigoriev I.V."/>
        </authorList>
    </citation>
    <scope>NUCLEOTIDE SEQUENCE [LARGE SCALE GENOMIC DNA]</scope>
    <source>
        <strain>CCE9901</strain>
    </source>
</reference>
<feature type="chain" id="PRO_0000371601" description="Small ribosomal subunit protein uS2">
    <location>
        <begin position="1"/>
        <end position="290"/>
    </location>
</feature>
<feature type="region of interest" description="Disordered" evidence="2">
    <location>
        <begin position="266"/>
        <end position="290"/>
    </location>
</feature>